<sequence>MEKDCQDIQQLDSEENDHQLSGDDEHGSHVQDPRIENPHWKGQPLSRPFPQRLCSTFRLSLLALAFNILLLVVICVVSSQSIQLQEEFRTLKETFSNFSSSTLMEFGALDTLGGSTNAILTSWLAQLEEKQQQLKADHSTLLFHLKHFPMDLRTLTCQLAYFQSNGTECCPVNWVEFGGSCYWFSRDGLTWAEADQYCQLENAHLLVINSREEQDFVVKHRSQFHIWIGLTDRDGSWKWVDGTDYRSNYRNWAFTQPDNWQGHEQGGGEDCAEILSDGHWNDNFCQQVNRWVCEKRRNITH</sequence>
<gene>
    <name type="primary">Asgr2</name>
    <name type="synonym">Asgr-2</name>
</gene>
<reference key="1">
    <citation type="journal article" date="1990" name="Biochim. Biophys. Acta">
        <title>Mouse asialoglycoprotein receptor cDNA sequence: conservation of receptor genes during mammalian evolution.</title>
        <authorList>
            <person name="Sanford J.P."/>
            <person name="Doyle D."/>
        </authorList>
    </citation>
    <scope>NUCLEOTIDE SEQUENCE [MRNA]</scope>
    <source>
        <strain>C57BL/6J</strain>
        <tissue>Liver</tissue>
    </source>
</reference>
<reference key="2">
    <citation type="journal article" date="2004" name="Genome Res.">
        <title>The status, quality, and expansion of the NIH full-length cDNA project: the Mammalian Gene Collection (MGC).</title>
        <authorList>
            <consortium name="The MGC Project Team"/>
        </authorList>
    </citation>
    <scope>NUCLEOTIDE SEQUENCE [LARGE SCALE MRNA]</scope>
    <source>
        <strain>FVB/N</strain>
        <tissue>Liver</tissue>
    </source>
</reference>
<reference key="3">
    <citation type="journal article" date="2010" name="Cell">
        <title>A tissue-specific atlas of mouse protein phosphorylation and expression.</title>
        <authorList>
            <person name="Huttlin E.L."/>
            <person name="Jedrychowski M.P."/>
            <person name="Elias J.E."/>
            <person name="Goswami T."/>
            <person name="Rad R."/>
            <person name="Beausoleil S.A."/>
            <person name="Villen J."/>
            <person name="Haas W."/>
            <person name="Sowa M.E."/>
            <person name="Gygi S.P."/>
        </authorList>
    </citation>
    <scope>IDENTIFICATION BY MASS SPECTROMETRY [LARGE SCALE ANALYSIS]</scope>
    <source>
        <tissue>Liver</tissue>
    </source>
</reference>
<feature type="chain" id="PRO_0000046655" description="Asialoglycoprotein receptor 2">
    <location>
        <begin position="1"/>
        <end position="301"/>
    </location>
</feature>
<feature type="topological domain" description="Cytoplasmic" evidence="3">
    <location>
        <begin position="1"/>
        <end position="58"/>
    </location>
</feature>
<feature type="transmembrane region" description="Helical; Signal-anchor for type II membrane protein" evidence="3">
    <location>
        <begin position="59"/>
        <end position="79"/>
    </location>
</feature>
<feature type="topological domain" description="Extracellular" evidence="3">
    <location>
        <begin position="80"/>
        <end position="301"/>
    </location>
</feature>
<feature type="domain" description="C-type lectin" evidence="4">
    <location>
        <begin position="169"/>
        <end position="295"/>
    </location>
</feature>
<feature type="region of interest" description="Disordered" evidence="5">
    <location>
        <begin position="1"/>
        <end position="43"/>
    </location>
</feature>
<feature type="compositionally biased region" description="Basic and acidic residues" evidence="5">
    <location>
        <begin position="16"/>
        <end position="39"/>
    </location>
</feature>
<feature type="modified residue" description="Phosphoserine" evidence="2">
    <location>
        <position position="13"/>
    </location>
</feature>
<feature type="lipid moiety-binding region" description="S-palmitoyl cysteine" evidence="1">
    <location>
        <position position="54"/>
    </location>
</feature>
<feature type="glycosylation site" description="N-linked (GlcNAc...) asparagine" evidence="3">
    <location>
        <position position="97"/>
    </location>
</feature>
<feature type="glycosylation site" description="N-linked (GlcNAc...) asparagine" evidence="3">
    <location>
        <position position="165"/>
    </location>
</feature>
<feature type="glycosylation site" description="N-linked (GlcNAc...) asparagine" evidence="3">
    <location>
        <position position="298"/>
    </location>
</feature>
<feature type="disulfide bond" evidence="4">
    <location>
        <begin position="170"/>
        <end position="181"/>
    </location>
</feature>
<feature type="disulfide bond" evidence="4">
    <location>
        <begin position="198"/>
        <end position="293"/>
    </location>
</feature>
<feature type="disulfide bond" evidence="4">
    <location>
        <begin position="271"/>
        <end position="285"/>
    </location>
</feature>
<accession>P24721</accession>
<organism>
    <name type="scientific">Mus musculus</name>
    <name type="common">Mouse</name>
    <dbReference type="NCBI Taxonomy" id="10090"/>
    <lineage>
        <taxon>Eukaryota</taxon>
        <taxon>Metazoa</taxon>
        <taxon>Chordata</taxon>
        <taxon>Craniata</taxon>
        <taxon>Vertebrata</taxon>
        <taxon>Euteleostomi</taxon>
        <taxon>Mammalia</taxon>
        <taxon>Eutheria</taxon>
        <taxon>Euarchontoglires</taxon>
        <taxon>Glires</taxon>
        <taxon>Rodentia</taxon>
        <taxon>Myomorpha</taxon>
        <taxon>Muroidea</taxon>
        <taxon>Muridae</taxon>
        <taxon>Murinae</taxon>
        <taxon>Mus</taxon>
        <taxon>Mus</taxon>
    </lineage>
</organism>
<comment type="function">
    <text>Mediates the endocytosis of plasma glycoproteins to which the terminal sialic acid residue on their complex carbohydrate moieties has been removed. The receptor recognizes terminal galactose and N-acetylgalactosamine units. After ligand binding to the receptor, the resulting complex is internalized and transported to a sorting organelle, where receptor and ligand are disassociated. The receptor then returns to the cell membrane surface.</text>
</comment>
<comment type="subunit">
    <text evidence="1">Interacts with LASS2.</text>
</comment>
<comment type="subcellular location">
    <subcellularLocation>
        <location>Membrane</location>
        <topology>Single-pass type II membrane protein</topology>
    </subcellularLocation>
</comment>
<comment type="tissue specificity">
    <text>Expressed exclusively in hepatic parenchymal cells.</text>
</comment>
<comment type="miscellaneous">
    <text>Calcium is required for ligand binding.</text>
</comment>
<comment type="online information" name="Functional Glycomics Gateway - Glycan Binding">
    <link uri="http://www.functionalglycomics.org/glycomics/GBPServlet?&amp;operationType=view&amp;cbpId=cbp_mou_Ctlect_159"/>
    <text>Hepatic asialoglycoprotein receptor subunit 2</text>
</comment>
<proteinExistence type="evidence at protein level"/>
<protein>
    <recommendedName>
        <fullName>Asialoglycoprotein receptor 2</fullName>
        <shortName>ASGP-R 2</shortName>
        <shortName>ASGPR 2</shortName>
    </recommendedName>
    <alternativeName>
        <fullName>Hepatic lectin 2</fullName>
        <shortName>HL-2</shortName>
        <shortName>mHL-2</shortName>
    </alternativeName>
</protein>
<keyword id="KW-0106">Calcium</keyword>
<keyword id="KW-1015">Disulfide bond</keyword>
<keyword id="KW-0254">Endocytosis</keyword>
<keyword id="KW-0325">Glycoprotein</keyword>
<keyword id="KW-0430">Lectin</keyword>
<keyword id="KW-0449">Lipoprotein</keyword>
<keyword id="KW-0472">Membrane</keyword>
<keyword id="KW-0564">Palmitate</keyword>
<keyword id="KW-0597">Phosphoprotein</keyword>
<keyword id="KW-0675">Receptor</keyword>
<keyword id="KW-1185">Reference proteome</keyword>
<keyword id="KW-0735">Signal-anchor</keyword>
<keyword id="KW-0812">Transmembrane</keyword>
<keyword id="KW-1133">Transmembrane helix</keyword>
<name>ASGR2_MOUSE</name>
<dbReference type="EMBL" id="X53042">
    <property type="protein sequence ID" value="CAA37211.1"/>
    <property type="molecule type" value="mRNA"/>
</dbReference>
<dbReference type="EMBL" id="BC011197">
    <property type="protein sequence ID" value="AAH11197.1"/>
    <property type="molecule type" value="mRNA"/>
</dbReference>
<dbReference type="CCDS" id="CCDS24934.1"/>
<dbReference type="PIR" id="S13165">
    <property type="entry name" value="S13165"/>
</dbReference>
<dbReference type="RefSeq" id="NP_001300854.1">
    <property type="nucleotide sequence ID" value="NM_001313925.1"/>
</dbReference>
<dbReference type="RefSeq" id="NP_001300855.1">
    <property type="nucleotide sequence ID" value="NM_001313926.1"/>
</dbReference>
<dbReference type="RefSeq" id="NP_001300856.1">
    <property type="nucleotide sequence ID" value="NM_001313927.1"/>
</dbReference>
<dbReference type="RefSeq" id="NP_031519.1">
    <property type="nucleotide sequence ID" value="NM_007493.3"/>
</dbReference>
<dbReference type="SMR" id="P24721"/>
<dbReference type="BioGRID" id="198221">
    <property type="interactions" value="1"/>
</dbReference>
<dbReference type="FunCoup" id="P24721">
    <property type="interactions" value="87"/>
</dbReference>
<dbReference type="STRING" id="10090.ENSMUSP00000099632"/>
<dbReference type="GlyCosmos" id="P24721">
    <property type="glycosylation" value="3 sites, No reported glycans"/>
</dbReference>
<dbReference type="GlyGen" id="P24721">
    <property type="glycosylation" value="3 sites"/>
</dbReference>
<dbReference type="iPTMnet" id="P24721"/>
<dbReference type="PhosphoSitePlus" id="P24721"/>
<dbReference type="SwissPalm" id="P24721"/>
<dbReference type="jPOST" id="P24721"/>
<dbReference type="PaxDb" id="10090-ENSMUSP00000099632"/>
<dbReference type="ProteomicsDB" id="281919"/>
<dbReference type="Antibodypedia" id="2656">
    <property type="antibodies" value="305 antibodies from 30 providers"/>
</dbReference>
<dbReference type="DNASU" id="11890"/>
<dbReference type="Ensembl" id="ENSMUST00000102572.8">
    <property type="protein sequence ID" value="ENSMUSP00000099632.2"/>
    <property type="gene ID" value="ENSMUSG00000040963.16"/>
</dbReference>
<dbReference type="GeneID" id="11890"/>
<dbReference type="KEGG" id="mmu:11890"/>
<dbReference type="UCSC" id="uc007jtt.1">
    <property type="organism name" value="mouse"/>
</dbReference>
<dbReference type="AGR" id="MGI:88082"/>
<dbReference type="CTD" id="433"/>
<dbReference type="MGI" id="MGI:88082">
    <property type="gene designation" value="Asgr2"/>
</dbReference>
<dbReference type="VEuPathDB" id="HostDB:ENSMUSG00000040963"/>
<dbReference type="eggNOG" id="KOG4297">
    <property type="taxonomic scope" value="Eukaryota"/>
</dbReference>
<dbReference type="GeneTree" id="ENSGT00940000162310"/>
<dbReference type="HOGENOM" id="CLU_049894_2_0_1"/>
<dbReference type="InParanoid" id="P24721"/>
<dbReference type="OMA" id="RTLTCQM"/>
<dbReference type="OrthoDB" id="2142683at2759"/>
<dbReference type="PhylomeDB" id="P24721"/>
<dbReference type="TreeFam" id="TF352155"/>
<dbReference type="Reactome" id="R-MMU-446203">
    <property type="pathway name" value="Asparagine N-linked glycosylation"/>
</dbReference>
<dbReference type="BioGRID-ORCS" id="11890">
    <property type="hits" value="1 hit in 77 CRISPR screens"/>
</dbReference>
<dbReference type="ChiTaRS" id="Asgr2">
    <property type="organism name" value="mouse"/>
</dbReference>
<dbReference type="PRO" id="PR:P24721"/>
<dbReference type="Proteomes" id="UP000000589">
    <property type="component" value="Chromosome 11"/>
</dbReference>
<dbReference type="RNAct" id="P24721">
    <property type="molecule type" value="protein"/>
</dbReference>
<dbReference type="Bgee" id="ENSMUSG00000040963">
    <property type="expression patterns" value="Expressed in liver and 50 other cell types or tissues"/>
</dbReference>
<dbReference type="ExpressionAtlas" id="P24721">
    <property type="expression patterns" value="baseline and differential"/>
</dbReference>
<dbReference type="GO" id="GO:0016020">
    <property type="term" value="C:membrane"/>
    <property type="evidence" value="ECO:0007669"/>
    <property type="project" value="UniProtKB-SubCell"/>
</dbReference>
<dbReference type="GO" id="GO:0030246">
    <property type="term" value="F:carbohydrate binding"/>
    <property type="evidence" value="ECO:0007669"/>
    <property type="project" value="UniProtKB-KW"/>
</dbReference>
<dbReference type="GO" id="GO:0030282">
    <property type="term" value="P:bone mineralization"/>
    <property type="evidence" value="ECO:0007669"/>
    <property type="project" value="Ensembl"/>
</dbReference>
<dbReference type="GO" id="GO:0006897">
    <property type="term" value="P:endocytosis"/>
    <property type="evidence" value="ECO:0007669"/>
    <property type="project" value="UniProtKB-KW"/>
</dbReference>
<dbReference type="GO" id="GO:0009100">
    <property type="term" value="P:glycoprotein metabolic process"/>
    <property type="evidence" value="ECO:0000315"/>
    <property type="project" value="MGI"/>
</dbReference>
<dbReference type="GO" id="GO:0055088">
    <property type="term" value="P:lipid homeostasis"/>
    <property type="evidence" value="ECO:0000315"/>
    <property type="project" value="MGI"/>
</dbReference>
<dbReference type="GO" id="GO:0031647">
    <property type="term" value="P:regulation of protein stability"/>
    <property type="evidence" value="ECO:0000315"/>
    <property type="project" value="MGI"/>
</dbReference>
<dbReference type="CDD" id="cd03590">
    <property type="entry name" value="CLECT_DC-SIGN_like"/>
    <property type="match status" value="1"/>
</dbReference>
<dbReference type="FunFam" id="3.10.100.10:FF:000041">
    <property type="entry name" value="Asialoglycoprotein receptor 1"/>
    <property type="match status" value="1"/>
</dbReference>
<dbReference type="Gene3D" id="3.10.100.10">
    <property type="entry name" value="Mannose-Binding Protein A, subunit A"/>
    <property type="match status" value="1"/>
</dbReference>
<dbReference type="InterPro" id="IPR001304">
    <property type="entry name" value="C-type_lectin-like"/>
</dbReference>
<dbReference type="InterPro" id="IPR016186">
    <property type="entry name" value="C-type_lectin-like/link_sf"/>
</dbReference>
<dbReference type="InterPro" id="IPR050111">
    <property type="entry name" value="C-type_lectin/snaclec_domain"/>
</dbReference>
<dbReference type="InterPro" id="IPR018378">
    <property type="entry name" value="C-type_lectin_CS"/>
</dbReference>
<dbReference type="InterPro" id="IPR033989">
    <property type="entry name" value="CD209-like_CTLD"/>
</dbReference>
<dbReference type="InterPro" id="IPR016187">
    <property type="entry name" value="CTDL_fold"/>
</dbReference>
<dbReference type="PANTHER" id="PTHR22803">
    <property type="entry name" value="MANNOSE, PHOSPHOLIPASE, LECTIN RECEPTOR RELATED"/>
    <property type="match status" value="1"/>
</dbReference>
<dbReference type="Pfam" id="PF00059">
    <property type="entry name" value="Lectin_C"/>
    <property type="match status" value="1"/>
</dbReference>
<dbReference type="Pfam" id="PF03954">
    <property type="entry name" value="Lectin_N"/>
    <property type="match status" value="1"/>
</dbReference>
<dbReference type="SMART" id="SM00034">
    <property type="entry name" value="CLECT"/>
    <property type="match status" value="1"/>
</dbReference>
<dbReference type="SUPFAM" id="SSF56436">
    <property type="entry name" value="C-type lectin-like"/>
    <property type="match status" value="1"/>
</dbReference>
<dbReference type="PROSITE" id="PS00615">
    <property type="entry name" value="C_TYPE_LECTIN_1"/>
    <property type="match status" value="1"/>
</dbReference>
<dbReference type="PROSITE" id="PS50041">
    <property type="entry name" value="C_TYPE_LECTIN_2"/>
    <property type="match status" value="1"/>
</dbReference>
<evidence type="ECO:0000250" key="1"/>
<evidence type="ECO:0000250" key="2">
    <source>
        <dbReference type="UniProtKB" id="P08290"/>
    </source>
</evidence>
<evidence type="ECO:0000255" key="3"/>
<evidence type="ECO:0000255" key="4">
    <source>
        <dbReference type="PROSITE-ProRule" id="PRU00040"/>
    </source>
</evidence>
<evidence type="ECO:0000256" key="5">
    <source>
        <dbReference type="SAM" id="MobiDB-lite"/>
    </source>
</evidence>